<dbReference type="EC" id="5.4.2.10" evidence="1"/>
<dbReference type="EMBL" id="CP001233">
    <property type="protein sequence ID" value="ACP04920.1"/>
    <property type="molecule type" value="Genomic_DNA"/>
</dbReference>
<dbReference type="RefSeq" id="WP_001281065.1">
    <property type="nucleotide sequence ID" value="NC_012578.1"/>
</dbReference>
<dbReference type="SMR" id="C3LSP4"/>
<dbReference type="KEGG" id="vcm:VCM66_0597"/>
<dbReference type="HOGENOM" id="CLU_016950_7_0_6"/>
<dbReference type="Proteomes" id="UP000001217">
    <property type="component" value="Chromosome I"/>
</dbReference>
<dbReference type="GO" id="GO:0005829">
    <property type="term" value="C:cytosol"/>
    <property type="evidence" value="ECO:0007669"/>
    <property type="project" value="TreeGrafter"/>
</dbReference>
<dbReference type="GO" id="GO:0000287">
    <property type="term" value="F:magnesium ion binding"/>
    <property type="evidence" value="ECO:0007669"/>
    <property type="project" value="UniProtKB-UniRule"/>
</dbReference>
<dbReference type="GO" id="GO:0008966">
    <property type="term" value="F:phosphoglucosamine mutase activity"/>
    <property type="evidence" value="ECO:0007669"/>
    <property type="project" value="UniProtKB-UniRule"/>
</dbReference>
<dbReference type="GO" id="GO:0004615">
    <property type="term" value="F:phosphomannomutase activity"/>
    <property type="evidence" value="ECO:0007669"/>
    <property type="project" value="TreeGrafter"/>
</dbReference>
<dbReference type="GO" id="GO:0005975">
    <property type="term" value="P:carbohydrate metabolic process"/>
    <property type="evidence" value="ECO:0007669"/>
    <property type="project" value="InterPro"/>
</dbReference>
<dbReference type="GO" id="GO:0009252">
    <property type="term" value="P:peptidoglycan biosynthetic process"/>
    <property type="evidence" value="ECO:0007669"/>
    <property type="project" value="TreeGrafter"/>
</dbReference>
<dbReference type="GO" id="GO:0006048">
    <property type="term" value="P:UDP-N-acetylglucosamine biosynthetic process"/>
    <property type="evidence" value="ECO:0007669"/>
    <property type="project" value="TreeGrafter"/>
</dbReference>
<dbReference type="CDD" id="cd05802">
    <property type="entry name" value="GlmM"/>
    <property type="match status" value="1"/>
</dbReference>
<dbReference type="FunFam" id="3.30.310.50:FF:000001">
    <property type="entry name" value="Phosphoglucosamine mutase"/>
    <property type="match status" value="1"/>
</dbReference>
<dbReference type="FunFam" id="3.40.120.10:FF:000001">
    <property type="entry name" value="Phosphoglucosamine mutase"/>
    <property type="match status" value="1"/>
</dbReference>
<dbReference type="FunFam" id="3.40.120.10:FF:000003">
    <property type="entry name" value="Phosphoglucosamine mutase"/>
    <property type="match status" value="1"/>
</dbReference>
<dbReference type="Gene3D" id="3.40.120.10">
    <property type="entry name" value="Alpha-D-Glucose-1,6-Bisphosphate, subunit A, domain 3"/>
    <property type="match status" value="3"/>
</dbReference>
<dbReference type="Gene3D" id="3.30.310.50">
    <property type="entry name" value="Alpha-D-phosphohexomutase, C-terminal domain"/>
    <property type="match status" value="1"/>
</dbReference>
<dbReference type="HAMAP" id="MF_01554_B">
    <property type="entry name" value="GlmM_B"/>
    <property type="match status" value="1"/>
</dbReference>
<dbReference type="InterPro" id="IPR005844">
    <property type="entry name" value="A-D-PHexomutase_a/b/a-I"/>
</dbReference>
<dbReference type="InterPro" id="IPR016055">
    <property type="entry name" value="A-D-PHexomutase_a/b/a-I/II/III"/>
</dbReference>
<dbReference type="InterPro" id="IPR005845">
    <property type="entry name" value="A-D-PHexomutase_a/b/a-II"/>
</dbReference>
<dbReference type="InterPro" id="IPR005846">
    <property type="entry name" value="A-D-PHexomutase_a/b/a-III"/>
</dbReference>
<dbReference type="InterPro" id="IPR005843">
    <property type="entry name" value="A-D-PHexomutase_C"/>
</dbReference>
<dbReference type="InterPro" id="IPR036900">
    <property type="entry name" value="A-D-PHexomutase_C_sf"/>
</dbReference>
<dbReference type="InterPro" id="IPR016066">
    <property type="entry name" value="A-D-PHexomutase_CS"/>
</dbReference>
<dbReference type="InterPro" id="IPR005841">
    <property type="entry name" value="Alpha-D-phosphohexomutase_SF"/>
</dbReference>
<dbReference type="InterPro" id="IPR006352">
    <property type="entry name" value="GlmM_bact"/>
</dbReference>
<dbReference type="InterPro" id="IPR050060">
    <property type="entry name" value="Phosphoglucosamine_mutase"/>
</dbReference>
<dbReference type="NCBIfam" id="TIGR01455">
    <property type="entry name" value="glmM"/>
    <property type="match status" value="1"/>
</dbReference>
<dbReference type="NCBIfam" id="NF008139">
    <property type="entry name" value="PRK10887.1"/>
    <property type="match status" value="1"/>
</dbReference>
<dbReference type="PANTHER" id="PTHR42946:SF1">
    <property type="entry name" value="PHOSPHOGLUCOMUTASE (ALPHA-D-GLUCOSE-1,6-BISPHOSPHATE-DEPENDENT)"/>
    <property type="match status" value="1"/>
</dbReference>
<dbReference type="PANTHER" id="PTHR42946">
    <property type="entry name" value="PHOSPHOHEXOSE MUTASE"/>
    <property type="match status" value="1"/>
</dbReference>
<dbReference type="Pfam" id="PF02878">
    <property type="entry name" value="PGM_PMM_I"/>
    <property type="match status" value="1"/>
</dbReference>
<dbReference type="Pfam" id="PF02879">
    <property type="entry name" value="PGM_PMM_II"/>
    <property type="match status" value="1"/>
</dbReference>
<dbReference type="Pfam" id="PF02880">
    <property type="entry name" value="PGM_PMM_III"/>
    <property type="match status" value="1"/>
</dbReference>
<dbReference type="Pfam" id="PF00408">
    <property type="entry name" value="PGM_PMM_IV"/>
    <property type="match status" value="1"/>
</dbReference>
<dbReference type="PRINTS" id="PR00509">
    <property type="entry name" value="PGMPMM"/>
</dbReference>
<dbReference type="SUPFAM" id="SSF55957">
    <property type="entry name" value="Phosphoglucomutase, C-terminal domain"/>
    <property type="match status" value="1"/>
</dbReference>
<dbReference type="SUPFAM" id="SSF53738">
    <property type="entry name" value="Phosphoglucomutase, first 3 domains"/>
    <property type="match status" value="3"/>
</dbReference>
<dbReference type="PROSITE" id="PS00710">
    <property type="entry name" value="PGM_PMM"/>
    <property type="match status" value="1"/>
</dbReference>
<reference key="1">
    <citation type="journal article" date="2008" name="PLoS ONE">
        <title>A recalibrated molecular clock and independent origins for the cholera pandemic clones.</title>
        <authorList>
            <person name="Feng L."/>
            <person name="Reeves P.R."/>
            <person name="Lan R."/>
            <person name="Ren Y."/>
            <person name="Gao C."/>
            <person name="Zhou Z."/>
            <person name="Ren Y."/>
            <person name="Cheng J."/>
            <person name="Wang W."/>
            <person name="Wang J."/>
            <person name="Qian W."/>
            <person name="Li D."/>
            <person name="Wang L."/>
        </authorList>
    </citation>
    <scope>NUCLEOTIDE SEQUENCE [LARGE SCALE GENOMIC DNA]</scope>
    <source>
        <strain>M66-2</strain>
    </source>
</reference>
<evidence type="ECO:0000255" key="1">
    <source>
        <dbReference type="HAMAP-Rule" id="MF_01554"/>
    </source>
</evidence>
<sequence>MSDKRRYFGTDGVRGKVGQYPITPDFVLKLGWAAGRVLAKQGTRKVIIGKDTRISGYMLESALEAGLAAAGLKATFTGPMPTPAVAYLTQTFRAEAGIVISASHNPYYDNGIKFFSYEGTKLPDDIELAIEAELDKDIECVESAELGKASRMVDAAGRYIEFCKSTFPSKLSLSGLKLVVDCANGATYHIAPNVFRELGAEVIAMGVEPNGLNINDQVGATDVRALQKRVVEEHAHLGLAFDGDGDRIIMVDHLGNKVDGDQIAYIIARDALRRGELKGGVVGTLMTNLGMENGLKQLGIPFVRAAVGDRYVMEKLLEKGWKIGAENSGHVILLDKVTTGDAIVAGLQVLASVVGSEMTLHELAKGMTLYPQVLENVRFAGDNNPLEADAVKAAVSEVEAELGSKGRVLLRKSGTEPLIRVMVEGEDETLVKQSALKIAQAVKDNC</sequence>
<proteinExistence type="inferred from homology"/>
<accession>C3LSP4</accession>
<protein>
    <recommendedName>
        <fullName evidence="1">Phosphoglucosamine mutase</fullName>
        <ecNumber evidence="1">5.4.2.10</ecNumber>
    </recommendedName>
</protein>
<comment type="function">
    <text evidence="1">Catalyzes the conversion of glucosamine-6-phosphate to glucosamine-1-phosphate.</text>
</comment>
<comment type="catalytic activity">
    <reaction evidence="1">
        <text>alpha-D-glucosamine 1-phosphate = D-glucosamine 6-phosphate</text>
        <dbReference type="Rhea" id="RHEA:23424"/>
        <dbReference type="ChEBI" id="CHEBI:58516"/>
        <dbReference type="ChEBI" id="CHEBI:58725"/>
        <dbReference type="EC" id="5.4.2.10"/>
    </reaction>
</comment>
<comment type="cofactor">
    <cofactor evidence="1">
        <name>Mg(2+)</name>
        <dbReference type="ChEBI" id="CHEBI:18420"/>
    </cofactor>
    <text evidence="1">Binds 1 Mg(2+) ion per subunit.</text>
</comment>
<comment type="PTM">
    <text evidence="1">Activated by phosphorylation.</text>
</comment>
<comment type="similarity">
    <text evidence="1">Belongs to the phosphohexose mutase family.</text>
</comment>
<keyword id="KW-0413">Isomerase</keyword>
<keyword id="KW-0460">Magnesium</keyword>
<keyword id="KW-0479">Metal-binding</keyword>
<keyword id="KW-0597">Phosphoprotein</keyword>
<gene>
    <name evidence="1" type="primary">glmM</name>
    <name type="ordered locus">VCM66_0597</name>
</gene>
<organism>
    <name type="scientific">Vibrio cholerae serotype O1 (strain M66-2)</name>
    <dbReference type="NCBI Taxonomy" id="579112"/>
    <lineage>
        <taxon>Bacteria</taxon>
        <taxon>Pseudomonadati</taxon>
        <taxon>Pseudomonadota</taxon>
        <taxon>Gammaproteobacteria</taxon>
        <taxon>Vibrionales</taxon>
        <taxon>Vibrionaceae</taxon>
        <taxon>Vibrio</taxon>
    </lineage>
</organism>
<name>GLMM_VIBCM</name>
<feature type="chain" id="PRO_1000185394" description="Phosphoglucosamine mutase">
    <location>
        <begin position="1"/>
        <end position="446"/>
    </location>
</feature>
<feature type="active site" description="Phosphoserine intermediate" evidence="1">
    <location>
        <position position="103"/>
    </location>
</feature>
<feature type="binding site" description="via phosphate group" evidence="1">
    <location>
        <position position="103"/>
    </location>
    <ligand>
        <name>Mg(2+)</name>
        <dbReference type="ChEBI" id="CHEBI:18420"/>
    </ligand>
</feature>
<feature type="binding site" evidence="1">
    <location>
        <position position="242"/>
    </location>
    <ligand>
        <name>Mg(2+)</name>
        <dbReference type="ChEBI" id="CHEBI:18420"/>
    </ligand>
</feature>
<feature type="binding site" evidence="1">
    <location>
        <position position="244"/>
    </location>
    <ligand>
        <name>Mg(2+)</name>
        <dbReference type="ChEBI" id="CHEBI:18420"/>
    </ligand>
</feature>
<feature type="binding site" evidence="1">
    <location>
        <position position="246"/>
    </location>
    <ligand>
        <name>Mg(2+)</name>
        <dbReference type="ChEBI" id="CHEBI:18420"/>
    </ligand>
</feature>
<feature type="modified residue" description="Phosphoserine" evidence="1">
    <location>
        <position position="103"/>
    </location>
</feature>